<reference evidence="5" key="1">
    <citation type="thesis" date="2006" institute="ICAT-FCUL" country="Portugal">
        <title>Molecular analysis of Populus euphratica Oliv. response to moderate heat stress.</title>
        <authorList>
            <person name="Ferreira S."/>
        </authorList>
    </citation>
    <scope>PROTEIN SEQUENCE</scope>
    <source>
        <tissue evidence="3">Leaf</tissue>
    </source>
</reference>
<name>ABP_POPEU</name>
<dbReference type="Proteomes" id="UP000694918">
    <property type="component" value="Unplaced"/>
</dbReference>
<sequence length="9" mass="1062">KGDIMVFPR</sequence>
<feature type="chain" id="PRO_0000304521" description="Probable auxin-binding protein">
    <location>
        <begin position="1" status="less than"/>
        <end position="9" status="greater than"/>
    </location>
</feature>
<feature type="non-terminal residue" evidence="4">
    <location>
        <position position="1"/>
    </location>
</feature>
<feature type="non-terminal residue" evidence="4">
    <location>
        <position position="9"/>
    </location>
</feature>
<accession>P84979</accession>
<protein>
    <recommendedName>
        <fullName>Probable auxin-binding protein</fullName>
    </recommendedName>
</protein>
<proteinExistence type="evidence at protein level"/>
<comment type="function">
    <text evidence="1">Probable receptor for the plant growth-promoting hormone auxin.</text>
</comment>
<comment type="similarity">
    <text evidence="2">Belongs to the germin family.</text>
</comment>
<organism>
    <name type="scientific">Populus euphratica</name>
    <name type="common">Euphrates poplar</name>
    <dbReference type="NCBI Taxonomy" id="75702"/>
    <lineage>
        <taxon>Eukaryota</taxon>
        <taxon>Viridiplantae</taxon>
        <taxon>Streptophyta</taxon>
        <taxon>Embryophyta</taxon>
        <taxon>Tracheophyta</taxon>
        <taxon>Spermatophyta</taxon>
        <taxon>Magnoliopsida</taxon>
        <taxon>eudicotyledons</taxon>
        <taxon>Gunneridae</taxon>
        <taxon>Pentapetalae</taxon>
        <taxon>rosids</taxon>
        <taxon>fabids</taxon>
        <taxon>Malpighiales</taxon>
        <taxon>Salicaceae</taxon>
        <taxon>Saliceae</taxon>
        <taxon>Populus</taxon>
    </lineage>
</organism>
<keyword id="KW-0903">Direct protein sequencing</keyword>
<keyword id="KW-1185">Reference proteome</keyword>
<evidence type="ECO:0000250" key="1">
    <source>
        <dbReference type="UniProtKB" id="O04011"/>
    </source>
</evidence>
<evidence type="ECO:0000255" key="2"/>
<evidence type="ECO:0000269" key="3">
    <source ref="1"/>
</evidence>
<evidence type="ECO:0000303" key="4">
    <source ref="1"/>
</evidence>
<evidence type="ECO:0000305" key="5"/>